<dbReference type="EMBL" id="X58358">
    <property type="protein sequence ID" value="CAA41255.1"/>
    <property type="molecule type" value="mRNA"/>
</dbReference>
<dbReference type="PIR" id="S17793">
    <property type="entry name" value="S17793"/>
</dbReference>
<dbReference type="SMR" id="P24862"/>
<dbReference type="GO" id="GO:0016538">
    <property type="term" value="F:cyclin-dependent protein serine/threonine kinase regulator activity"/>
    <property type="evidence" value="ECO:0007669"/>
    <property type="project" value="InterPro"/>
</dbReference>
<dbReference type="GO" id="GO:0051301">
    <property type="term" value="P:cell division"/>
    <property type="evidence" value="ECO:0007669"/>
    <property type="project" value="UniProtKB-KW"/>
</dbReference>
<dbReference type="GO" id="GO:0044772">
    <property type="term" value="P:mitotic cell cycle phase transition"/>
    <property type="evidence" value="ECO:0007669"/>
    <property type="project" value="InterPro"/>
</dbReference>
<dbReference type="CDD" id="cd20507">
    <property type="entry name" value="CYCLIN_CCNB1-like_rpt1"/>
    <property type="match status" value="1"/>
</dbReference>
<dbReference type="CDD" id="cd20509">
    <property type="entry name" value="CYCLIN_CCNB1-like_rpt2"/>
    <property type="match status" value="1"/>
</dbReference>
<dbReference type="FunFam" id="1.10.472.10:FF:000001">
    <property type="entry name" value="G2/mitotic-specific cyclin"/>
    <property type="match status" value="1"/>
</dbReference>
<dbReference type="Gene3D" id="1.10.472.10">
    <property type="entry name" value="Cyclin-like"/>
    <property type="match status" value="2"/>
</dbReference>
<dbReference type="InterPro" id="IPR039361">
    <property type="entry name" value="Cyclin"/>
</dbReference>
<dbReference type="InterPro" id="IPR013763">
    <property type="entry name" value="Cyclin-like_dom"/>
</dbReference>
<dbReference type="InterPro" id="IPR036915">
    <property type="entry name" value="Cyclin-like_sf"/>
</dbReference>
<dbReference type="InterPro" id="IPR046965">
    <property type="entry name" value="Cyclin_A/B-like"/>
</dbReference>
<dbReference type="InterPro" id="IPR004367">
    <property type="entry name" value="Cyclin_C-dom"/>
</dbReference>
<dbReference type="InterPro" id="IPR006671">
    <property type="entry name" value="Cyclin_N"/>
</dbReference>
<dbReference type="InterPro" id="IPR048258">
    <property type="entry name" value="Cyclins_cyclin-box"/>
</dbReference>
<dbReference type="PANTHER" id="PTHR10177">
    <property type="entry name" value="CYCLINS"/>
    <property type="match status" value="1"/>
</dbReference>
<dbReference type="Pfam" id="PF02984">
    <property type="entry name" value="Cyclin_C"/>
    <property type="match status" value="1"/>
</dbReference>
<dbReference type="Pfam" id="PF00134">
    <property type="entry name" value="Cyclin_N"/>
    <property type="match status" value="1"/>
</dbReference>
<dbReference type="PIRSF" id="PIRSF001771">
    <property type="entry name" value="Cyclin_A_B_D_E"/>
    <property type="match status" value="1"/>
</dbReference>
<dbReference type="SMART" id="SM00385">
    <property type="entry name" value="CYCLIN"/>
    <property type="match status" value="2"/>
</dbReference>
<dbReference type="SMART" id="SM01332">
    <property type="entry name" value="Cyclin_C"/>
    <property type="match status" value="1"/>
</dbReference>
<dbReference type="SUPFAM" id="SSF47954">
    <property type="entry name" value="Cyclin-like"/>
    <property type="match status" value="2"/>
</dbReference>
<dbReference type="PROSITE" id="PS00292">
    <property type="entry name" value="CYCLINS"/>
    <property type="match status" value="1"/>
</dbReference>
<feature type="chain" id="PRO_0000080387" description="G2/mitotic-specific cyclin-B">
    <location>
        <begin position="1"/>
        <end position="408"/>
    </location>
</feature>
<accession>P24862</accession>
<protein>
    <recommendedName>
        <fullName>G2/mitotic-specific cyclin-B</fullName>
    </recommendedName>
</protein>
<evidence type="ECO:0000305" key="1"/>
<organism>
    <name type="scientific">Patella vulgata</name>
    <name type="common">Common limpet</name>
    <dbReference type="NCBI Taxonomy" id="6465"/>
    <lineage>
        <taxon>Eukaryota</taxon>
        <taxon>Metazoa</taxon>
        <taxon>Spiralia</taxon>
        <taxon>Lophotrochozoa</taxon>
        <taxon>Mollusca</taxon>
        <taxon>Gastropoda</taxon>
        <taxon>Patellogastropoda</taxon>
        <taxon>Patelloidea</taxon>
        <taxon>Patellidae</taxon>
        <taxon>Patella</taxon>
    </lineage>
</organism>
<comment type="function">
    <text>Essential for the control of the cell cycle at the G2/M (mitosis) transition.</text>
</comment>
<comment type="subunit">
    <text>Interacts with the CDC2 protein kinase to form a serine/threonine kinase holoenzyme complex also known as maturation promoting factor (MPF). The cyclin subunit imparts substrate specificity to the complex.</text>
</comment>
<comment type="developmental stage">
    <text>Accumulates steadily during G2 and is abruptly destroyed at mitosis.</text>
</comment>
<comment type="similarity">
    <text evidence="1">Belongs to the cyclin family. Cyclin AB subfamily.</text>
</comment>
<keyword id="KW-0131">Cell cycle</keyword>
<keyword id="KW-0132">Cell division</keyword>
<keyword id="KW-0195">Cyclin</keyword>
<keyword id="KW-0498">Mitosis</keyword>
<name>CCNB_PATVU</name>
<proteinExistence type="evidence at transcript level"/>
<sequence>MTTVTRSSSANLGASQKLAVKKGDAMMSSKGISNRSNRSALGDIGNKVSNMTIDPTKKALGLPVIKKEIIQKSKFTRSKTTVSESDILLQEKESACCSRAYTIFKDAIEPIVSTVDLMDISEDKPDAFSKVLLTVEDIDANDKDNPQLVSDYVNDIYHYMRHLEETFAVKANFLEGQEVTGKMRSILIDWLCQVHHRFHLLQETLYLTVSIIDRFLQVHPISRNKLQLVGVTSMLLASKYEEMYAPEVADFVYITDNAYTKADIRTMEQTILKTLDFSFGKPLCLHFLRRNSKAGQVDATKHTLAKYLMELTIIEYDMVHCNPSIIAAAALCLSMKVLDDSQWSETLAHYSNYSEKEIYPVMQKLAQLVVKAETSKLTAVKIKYSSSRFMKISSIPELKSNAITDLVL</sequence>
<reference key="1">
    <citation type="journal article" date="1991" name="EMBO J.">
        <title>The role of cyclins in the maturation of Patella vulgata oocytes.</title>
        <authorList>
            <person name="van Loon A.E."/>
            <person name="Colas P."/>
            <person name="Goedemans H.J."/>
            <person name="Neant I."/>
            <person name="Dalbon P."/>
            <person name="Guerrier P."/>
        </authorList>
    </citation>
    <scope>NUCLEOTIDE SEQUENCE [MRNA]</scope>
    <source>
        <tissue>Oocyte</tissue>
    </source>
</reference>